<keyword id="KW-0067">ATP-binding</keyword>
<keyword id="KW-0997">Cell inner membrane</keyword>
<keyword id="KW-1003">Cell membrane</keyword>
<keyword id="KW-0472">Membrane</keyword>
<keyword id="KW-0547">Nucleotide-binding</keyword>
<keyword id="KW-1278">Translocase</keyword>
<keyword id="KW-0813">Transport</keyword>
<organism>
    <name type="scientific">Escherichia coli O157:H7 (strain EC4115 / EHEC)</name>
    <dbReference type="NCBI Taxonomy" id="444450"/>
    <lineage>
        <taxon>Bacteria</taxon>
        <taxon>Pseudomonadati</taxon>
        <taxon>Pseudomonadota</taxon>
        <taxon>Gammaproteobacteria</taxon>
        <taxon>Enterobacterales</taxon>
        <taxon>Enterobacteriaceae</taxon>
        <taxon>Escherichia</taxon>
    </lineage>
</organism>
<evidence type="ECO:0000255" key="1">
    <source>
        <dbReference type="HAMAP-Rule" id="MF_01005"/>
    </source>
</evidence>
<accession>B5YPZ7</accession>
<feature type="chain" id="PRO_1000134659" description="Vitamin B12 import ATP-binding protein BtuD">
    <location>
        <begin position="1"/>
        <end position="249"/>
    </location>
</feature>
<feature type="domain" description="ABC transporter" evidence="1">
    <location>
        <begin position="1"/>
        <end position="233"/>
    </location>
</feature>
<feature type="binding site" evidence="1">
    <location>
        <begin position="33"/>
        <end position="40"/>
    </location>
    <ligand>
        <name>ATP</name>
        <dbReference type="ChEBI" id="CHEBI:30616"/>
    </ligand>
</feature>
<dbReference type="EC" id="7.6.2.8" evidence="1"/>
<dbReference type="EMBL" id="CP001164">
    <property type="protein sequence ID" value="ACI35653.1"/>
    <property type="molecule type" value="Genomic_DNA"/>
</dbReference>
<dbReference type="RefSeq" id="WP_000029463.1">
    <property type="nucleotide sequence ID" value="NC_011353.1"/>
</dbReference>
<dbReference type="SMR" id="B5YPZ7"/>
<dbReference type="KEGG" id="ecf:ECH74115_2427"/>
<dbReference type="HOGENOM" id="CLU_000604_1_11_6"/>
<dbReference type="GO" id="GO:0005886">
    <property type="term" value="C:plasma membrane"/>
    <property type="evidence" value="ECO:0007669"/>
    <property type="project" value="UniProtKB-SubCell"/>
</dbReference>
<dbReference type="GO" id="GO:0015420">
    <property type="term" value="F:ABC-type vitamin B12 transporter activity"/>
    <property type="evidence" value="ECO:0007669"/>
    <property type="project" value="UniProtKB-UniRule"/>
</dbReference>
<dbReference type="GO" id="GO:0005524">
    <property type="term" value="F:ATP binding"/>
    <property type="evidence" value="ECO:0007669"/>
    <property type="project" value="UniProtKB-KW"/>
</dbReference>
<dbReference type="GO" id="GO:0016887">
    <property type="term" value="F:ATP hydrolysis activity"/>
    <property type="evidence" value="ECO:0007669"/>
    <property type="project" value="InterPro"/>
</dbReference>
<dbReference type="CDD" id="cd03214">
    <property type="entry name" value="ABC_Iron-Siderophores_B12_Hemin"/>
    <property type="match status" value="1"/>
</dbReference>
<dbReference type="FunFam" id="3.40.50.300:FF:000462">
    <property type="entry name" value="Vitamin B12 import ATP-binding protein BtuD"/>
    <property type="match status" value="1"/>
</dbReference>
<dbReference type="Gene3D" id="3.40.50.300">
    <property type="entry name" value="P-loop containing nucleotide triphosphate hydrolases"/>
    <property type="match status" value="1"/>
</dbReference>
<dbReference type="HAMAP" id="MF_01005">
    <property type="entry name" value="BtuD"/>
    <property type="match status" value="1"/>
</dbReference>
<dbReference type="InterPro" id="IPR003593">
    <property type="entry name" value="AAA+_ATPase"/>
</dbReference>
<dbReference type="InterPro" id="IPR003439">
    <property type="entry name" value="ABC_transporter-like_ATP-bd"/>
</dbReference>
<dbReference type="InterPro" id="IPR017871">
    <property type="entry name" value="ABC_transporter-like_CS"/>
</dbReference>
<dbReference type="InterPro" id="IPR023693">
    <property type="entry name" value="ABC_transptr_BtuD"/>
</dbReference>
<dbReference type="InterPro" id="IPR050153">
    <property type="entry name" value="Metal_Ion_Import_ABC"/>
</dbReference>
<dbReference type="InterPro" id="IPR027417">
    <property type="entry name" value="P-loop_NTPase"/>
</dbReference>
<dbReference type="NCBIfam" id="NF002981">
    <property type="entry name" value="PRK03695.1"/>
    <property type="match status" value="1"/>
</dbReference>
<dbReference type="PANTHER" id="PTHR42734">
    <property type="entry name" value="METAL TRANSPORT SYSTEM ATP-BINDING PROTEIN TM_0124-RELATED"/>
    <property type="match status" value="1"/>
</dbReference>
<dbReference type="PANTHER" id="PTHR42734:SF18">
    <property type="entry name" value="VITAMIN B12 IMPORT ATP-BINDING PROTEIN BTUD"/>
    <property type="match status" value="1"/>
</dbReference>
<dbReference type="Pfam" id="PF00005">
    <property type="entry name" value="ABC_tran"/>
    <property type="match status" value="1"/>
</dbReference>
<dbReference type="SMART" id="SM00382">
    <property type="entry name" value="AAA"/>
    <property type="match status" value="1"/>
</dbReference>
<dbReference type="SUPFAM" id="SSF52540">
    <property type="entry name" value="P-loop containing nucleoside triphosphate hydrolases"/>
    <property type="match status" value="1"/>
</dbReference>
<dbReference type="PROSITE" id="PS00211">
    <property type="entry name" value="ABC_TRANSPORTER_1"/>
    <property type="match status" value="1"/>
</dbReference>
<dbReference type="PROSITE" id="PS50893">
    <property type="entry name" value="ABC_TRANSPORTER_2"/>
    <property type="match status" value="1"/>
</dbReference>
<name>BTUD_ECO5E</name>
<gene>
    <name evidence="1" type="primary">btuD</name>
    <name type="ordered locus">ECH74115_2427</name>
</gene>
<reference key="1">
    <citation type="journal article" date="2011" name="Proc. Natl. Acad. Sci. U.S.A.">
        <title>Genomic anatomy of Escherichia coli O157:H7 outbreaks.</title>
        <authorList>
            <person name="Eppinger M."/>
            <person name="Mammel M.K."/>
            <person name="Leclerc J.E."/>
            <person name="Ravel J."/>
            <person name="Cebula T.A."/>
        </authorList>
    </citation>
    <scope>NUCLEOTIDE SEQUENCE [LARGE SCALE GENOMIC DNA]</scope>
    <source>
        <strain>EC4115 / EHEC</strain>
    </source>
</reference>
<comment type="function">
    <text evidence="1">Part of the ABC transporter complex BtuCDF involved in vitamin B12 import. Responsible for energy coupling to the transport system.</text>
</comment>
<comment type="catalytic activity">
    <reaction evidence="1">
        <text>an R-cob(III)alamin(out) + ATP + H2O = an R-cob(III)alamin(in) + ADP + phosphate + H(+)</text>
        <dbReference type="Rhea" id="RHEA:17873"/>
        <dbReference type="ChEBI" id="CHEBI:15377"/>
        <dbReference type="ChEBI" id="CHEBI:15378"/>
        <dbReference type="ChEBI" id="CHEBI:30616"/>
        <dbReference type="ChEBI" id="CHEBI:43474"/>
        <dbReference type="ChEBI" id="CHEBI:140785"/>
        <dbReference type="ChEBI" id="CHEBI:456216"/>
        <dbReference type="EC" id="7.6.2.8"/>
    </reaction>
</comment>
<comment type="subunit">
    <text evidence="1">The complex is composed of two ATP-binding proteins (BtuD), two transmembrane proteins (BtuC) and a solute-binding protein (BtuF).</text>
</comment>
<comment type="subcellular location">
    <subcellularLocation>
        <location evidence="1">Cell inner membrane</location>
        <topology evidence="1">Peripheral membrane protein</topology>
    </subcellularLocation>
</comment>
<comment type="similarity">
    <text evidence="1">Belongs to the ABC transporter superfamily. Vitamin B12 importer (TC 3.A.1.13.1) family.</text>
</comment>
<protein>
    <recommendedName>
        <fullName evidence="1">Vitamin B12 import ATP-binding protein BtuD</fullName>
        <ecNumber evidence="1">7.6.2.8</ecNumber>
    </recommendedName>
    <alternativeName>
        <fullName evidence="1">Vitamin B12-transporting ATPase</fullName>
    </alternativeName>
</protein>
<proteinExistence type="inferred from homology"/>
<sequence length="249" mass="27097">MSIVMQLQDVAESTRLGPLSGEVRAGEILHLVGPNGAGKSTLLARMAGMTSGKGSIQFAGQPLEAWSATKLALHRAYLSQQQTPPFAMPVWHYLTLHQHDKTRTELLNDVAGALALDDKLGRSTNQLSGGEWQRVRLAAVVLQITPQANPAGQLLLLDEPMNSLDVAQQSALDKILSALCQQGLAIVMSSHDLNHTLRHAHRAWLLKGGKMLASGRREDVLTPPNLAQAYGMNFRRLDIEGHRMLISTI</sequence>